<reference key="1">
    <citation type="journal article" date="1995" name="Science">
        <title>Whole-genome random sequencing and assembly of Haemophilus influenzae Rd.</title>
        <authorList>
            <person name="Fleischmann R.D."/>
            <person name="Adams M.D."/>
            <person name="White O."/>
            <person name="Clayton R.A."/>
            <person name="Kirkness E.F."/>
            <person name="Kerlavage A.R."/>
            <person name="Bult C.J."/>
            <person name="Tomb J.-F."/>
            <person name="Dougherty B.A."/>
            <person name="Merrick J.M."/>
            <person name="McKenney K."/>
            <person name="Sutton G.G."/>
            <person name="FitzHugh W."/>
            <person name="Fields C.A."/>
            <person name="Gocayne J.D."/>
            <person name="Scott J.D."/>
            <person name="Shirley R."/>
            <person name="Liu L.-I."/>
            <person name="Glodek A."/>
            <person name="Kelley J.M."/>
            <person name="Weidman J.F."/>
            <person name="Phillips C.A."/>
            <person name="Spriggs T."/>
            <person name="Hedblom E."/>
            <person name="Cotton M.D."/>
            <person name="Utterback T.R."/>
            <person name="Hanna M.C."/>
            <person name="Nguyen D.T."/>
            <person name="Saudek D.M."/>
            <person name="Brandon R.C."/>
            <person name="Fine L.D."/>
            <person name="Fritchman J.L."/>
            <person name="Fuhrmann J.L."/>
            <person name="Geoghagen N.S.M."/>
            <person name="Gnehm C.L."/>
            <person name="McDonald L.A."/>
            <person name="Small K.V."/>
            <person name="Fraser C.M."/>
            <person name="Smith H.O."/>
            <person name="Venter J.C."/>
        </authorList>
    </citation>
    <scope>NUCLEOTIDE SEQUENCE [LARGE SCALE GENOMIC DNA]</scope>
    <source>
        <strain>ATCC 51907 / DSM 11121 / KW20 / Rd</strain>
    </source>
</reference>
<protein>
    <recommendedName>
        <fullName>Mu-like prophage FluMu F protein</fullName>
    </recommendedName>
</protein>
<name>VPF_HAEIN</name>
<comment type="function">
    <text evidence="1">Involved in virion morphogenesis.</text>
</comment>
<comment type="similarity">
    <text evidence="2">To phage Mu protein F.</text>
</comment>
<feature type="chain" id="PRO_0000077681" description="Mu-like prophage FluMu F protein">
    <location>
        <begin position="1"/>
        <end position="414"/>
    </location>
</feature>
<proteinExistence type="inferred from homology"/>
<accession>P44226</accession>
<gene>
    <name type="ordered locus">HI_1502</name>
</gene>
<sequence length="414" mass="46495">MNITWNWYEQLESAHARAFTVAKATKAEVLDTIRWATEQAIANGTGEREYIKKLEPMLKELGWWGKAKDENGNEVQLGSPRRLRTILRTNKITAYHAARYAQQMENVDEQPYWRYVAVNDSRTRASHLALHGKIYRADDPIWQTMYPPNDWGCRCRVEALSEYAVQSRGLKISSSDGEMEMEEAVVGIDKDTGEEIRTTVSKIKTDQGEMKVGAGWNYNVGSAAFGTDVAVLRKLQQVKNRELRQQTIQAINNSEARHKAFADWVLANLGKRGASARYMSAGLVTTEIAEAVTEITQGGKNAELVLVMSEKRLAHANSDKHHEGGVGLTAEEYASISRIVANPSLVLWDTLEGHNNLIYINQERTIQVIVDVPNKHSIKPKEKVDAIINAYKVDMNNVKRQLSGGNYVLLKGKL</sequence>
<keyword id="KW-1185">Reference proteome</keyword>
<dbReference type="EMBL" id="L42023">
    <property type="protein sequence ID" value="AAC23163.1"/>
    <property type="molecule type" value="Genomic_DNA"/>
</dbReference>
<dbReference type="PIR" id="B64033">
    <property type="entry name" value="B64033"/>
</dbReference>
<dbReference type="RefSeq" id="NP_439652.1">
    <property type="nucleotide sequence ID" value="NC_000907.1"/>
</dbReference>
<dbReference type="SMR" id="P44226"/>
<dbReference type="STRING" id="71421.HI_1502"/>
<dbReference type="EnsemblBacteria" id="AAC23163">
    <property type="protein sequence ID" value="AAC23163"/>
    <property type="gene ID" value="HI_1502"/>
</dbReference>
<dbReference type="KEGG" id="hin:HI_1502"/>
<dbReference type="PATRIC" id="fig|71421.8.peg.1572"/>
<dbReference type="eggNOG" id="COG2369">
    <property type="taxonomic scope" value="Bacteria"/>
</dbReference>
<dbReference type="HOGENOM" id="CLU_044450_3_1_6"/>
<dbReference type="OrthoDB" id="9813502at2"/>
<dbReference type="PhylomeDB" id="P44226"/>
<dbReference type="BioCyc" id="HINF71421:G1GJ1-1525-MONOMER"/>
<dbReference type="Proteomes" id="UP000000579">
    <property type="component" value="Chromosome"/>
</dbReference>
<dbReference type="InterPro" id="IPR006528">
    <property type="entry name" value="Phage_head_morphogenesis_dom"/>
</dbReference>
<dbReference type="NCBIfam" id="TIGR01641">
    <property type="entry name" value="phageSPP1_gp7"/>
    <property type="match status" value="1"/>
</dbReference>
<dbReference type="Pfam" id="PF04233">
    <property type="entry name" value="Phage_Mu_F"/>
    <property type="match status" value="1"/>
</dbReference>
<organism>
    <name type="scientific">Haemophilus influenzae (strain ATCC 51907 / DSM 11121 / KW20 / Rd)</name>
    <dbReference type="NCBI Taxonomy" id="71421"/>
    <lineage>
        <taxon>Bacteria</taxon>
        <taxon>Pseudomonadati</taxon>
        <taxon>Pseudomonadota</taxon>
        <taxon>Gammaproteobacteria</taxon>
        <taxon>Pasteurellales</taxon>
        <taxon>Pasteurellaceae</taxon>
        <taxon>Haemophilus</taxon>
    </lineage>
</organism>
<evidence type="ECO:0000250" key="1"/>
<evidence type="ECO:0000305" key="2"/>